<accession>P0DJ03</accession>
<name>NDB4S_HETPE</name>
<comment type="function">
    <text evidence="1 3">Amphipathic peptide with antimicrobial activity.</text>
</comment>
<comment type="subcellular location">
    <subcellularLocation>
        <location evidence="1">Secreted</location>
    </subcellularLocation>
    <subcellularLocation>
        <location evidence="1">Target cell membrane</location>
    </subcellularLocation>
    <text evidence="1">Forms an alpha-helical membrane channel in the prey.</text>
</comment>
<comment type="tissue specificity">
    <text>Expressed by the venom gland.</text>
</comment>
<comment type="miscellaneous">
    <text evidence="7">Negative results: does not show antiviral activity.</text>
</comment>
<comment type="similarity">
    <text evidence="6">Belongs to the non-disulfide-bridged peptide (NDBP) superfamily. Short antimicrobial peptide (group 4) family.</text>
</comment>
<proteinExistence type="evidence at transcript level"/>
<evidence type="ECO:0000250" key="1"/>
<evidence type="ECO:0000255" key="2"/>
<evidence type="ECO:0000269" key="3">
    <source>
    </source>
</evidence>
<evidence type="ECO:0000303" key="4">
    <source>
    </source>
</evidence>
<evidence type="ECO:0000303" key="5">
    <source>
    </source>
</evidence>
<evidence type="ECO:0000305" key="6"/>
<evidence type="ECO:0000305" key="7">
    <source>
    </source>
</evidence>
<protein>
    <recommendedName>
        <fullName evidence="4">Peptide Hp1035</fullName>
    </recommendedName>
    <alternativeName>
        <fullName evidence="5">Non-disulfide-bridged peptide 5.10</fullName>
        <shortName evidence="5">NDBP-5.10</shortName>
    </alternativeName>
</protein>
<dbReference type="SMR" id="P0DJ03"/>
<dbReference type="GO" id="GO:0005576">
    <property type="term" value="C:extracellular region"/>
    <property type="evidence" value="ECO:0007669"/>
    <property type="project" value="UniProtKB-SubCell"/>
</dbReference>
<dbReference type="GO" id="GO:0016020">
    <property type="term" value="C:membrane"/>
    <property type="evidence" value="ECO:0007669"/>
    <property type="project" value="UniProtKB-KW"/>
</dbReference>
<dbReference type="GO" id="GO:0044218">
    <property type="term" value="C:other organism cell membrane"/>
    <property type="evidence" value="ECO:0007669"/>
    <property type="project" value="UniProtKB-KW"/>
</dbReference>
<organism>
    <name type="scientific">Heterometrus petersii</name>
    <name type="common">Asian forest scorpion</name>
    <dbReference type="NCBI Taxonomy" id="754296"/>
    <lineage>
        <taxon>Eukaryota</taxon>
        <taxon>Metazoa</taxon>
        <taxon>Ecdysozoa</taxon>
        <taxon>Arthropoda</taxon>
        <taxon>Chelicerata</taxon>
        <taxon>Arachnida</taxon>
        <taxon>Scorpiones</taxon>
        <taxon>Iurida</taxon>
        <taxon>Scorpionoidea</taxon>
        <taxon>Scorpionidae</taxon>
        <taxon>Heterometrinae</taxon>
        <taxon>Heterometrus</taxon>
    </lineage>
</organism>
<keyword id="KW-0027">Amidation</keyword>
<keyword id="KW-0929">Antimicrobial</keyword>
<keyword id="KW-0165">Cleavage on pair of basic residues</keyword>
<keyword id="KW-0472">Membrane</keyword>
<keyword id="KW-0964">Secreted</keyword>
<keyword id="KW-0732">Signal</keyword>
<keyword id="KW-1052">Target cell membrane</keyword>
<keyword id="KW-1053">Target membrane</keyword>
<reference key="1">
    <citation type="journal article" date="2010" name="Proteomics">
        <title>Molecular diversity of toxic components from the scorpion Heterometrus petersii venom revealed by proteomic and transcriptome analysis.</title>
        <authorList>
            <person name="Ma Y."/>
            <person name="Zhao Y."/>
            <person name="Zhao R."/>
            <person name="Zhang W."/>
            <person name="He Y."/>
            <person name="Wu Y."/>
            <person name="Cao Z."/>
            <person name="Guo L."/>
            <person name="Li W."/>
        </authorList>
    </citation>
    <scope>NUCLEOTIDE SEQUENCE [MRNA]</scope>
    <source>
        <tissue>Venom gland</tissue>
    </source>
</reference>
<reference key="2">
    <citation type="journal article" date="2011" name="Peptides">
        <title>A new natural alpha-helical peptide from the venom of the scorpion Heterometrus petersii kills HCV.</title>
        <authorList>
            <person name="Yan R."/>
            <person name="Zhao Z."/>
            <person name="He Y."/>
            <person name="Wu L."/>
            <person name="Cai D."/>
            <person name="Hong W."/>
            <person name="Wu Y."/>
            <person name="Cao Z."/>
            <person name="Zheng C."/>
            <person name="Li W."/>
        </authorList>
    </citation>
    <scope>NUCLEOTIDE SEQUENCE [MRNA]</scope>
    <scope>SYNTHESIS OF 24-36</scope>
    <scope>CIRCULAR DICHROISM</scope>
    <source>
        <tissue>Venom gland</tissue>
    </source>
</reference>
<reference key="3">
    <citation type="journal article" date="2014" name="Antiviral Res.">
        <title>Inhibitory activity and mechanism of two scorpion venom peptides against herpes simplex virus type 1.</title>
        <authorList>
            <person name="Hong W."/>
            <person name="Li T."/>
            <person name="Song Y."/>
            <person name="Zhang R."/>
            <person name="Zeng Z."/>
            <person name="Han S."/>
            <person name="Zhang X."/>
            <person name="Wu Y."/>
            <person name="Li W."/>
            <person name="Cao Z."/>
        </authorList>
    </citation>
    <scope>SYNTHESIS OF 24-36</scope>
    <scope>FUNCTION</scope>
</reference>
<reference key="4">
    <citation type="journal article" date="2012" name="Peptides">
        <title>Gene cloning and functional characterization of four novel antimicrobial-like peptides from scorpions of the family Vaejovidae.</title>
        <authorList>
            <person name="Ramirez-Carreto S."/>
            <person name="Quintero-Hernandez V."/>
            <person name="Jimenez-Vargas J.M."/>
            <person name="Corzo G."/>
            <person name="Possani L.D."/>
            <person name="Becerril B."/>
            <person name="Ortiz E."/>
        </authorList>
    </citation>
    <scope>NOMENCLATURE</scope>
</reference>
<sequence>MKTQFVILLVALVLFQMFAQSEAIFSAIGGFLKSIFGKRGLQDLDMDDLDQLFDGEISQADINFLNQLMR</sequence>
<feature type="signal peptide" evidence="2">
    <location>
        <begin position="1"/>
        <end position="23"/>
    </location>
</feature>
<feature type="peptide" id="PRO_0000412877" description="Peptide Hp1035">
    <location>
        <begin position="24"/>
        <end position="36"/>
    </location>
</feature>
<feature type="propeptide" id="PRO_0000412878" evidence="1">
    <location>
        <begin position="40"/>
        <end position="70"/>
    </location>
</feature>
<feature type="modified residue" description="Phenylalanine amide" evidence="1">
    <location>
        <position position="36"/>
    </location>
</feature>